<name>VATF_NEUCR</name>
<feature type="chain" id="PRO_0000144810" description="V-type proton ATPase subunit F">
    <location>
        <begin position="1"/>
        <end position="124"/>
    </location>
</feature>
<protein>
    <recommendedName>
        <fullName>V-type proton ATPase subunit F</fullName>
        <shortName>V-ATPase subunit F</shortName>
    </recommendedName>
    <alternativeName>
        <fullName>V-ATPase 14 kDa subunit</fullName>
    </alternativeName>
    <alternativeName>
        <fullName>Vacuolar proton pump subunit F</fullName>
    </alternativeName>
</protein>
<organism>
    <name type="scientific">Neurospora crassa (strain ATCC 24698 / 74-OR23-1A / CBS 708.71 / DSM 1257 / FGSC 987)</name>
    <dbReference type="NCBI Taxonomy" id="367110"/>
    <lineage>
        <taxon>Eukaryota</taxon>
        <taxon>Fungi</taxon>
        <taxon>Dikarya</taxon>
        <taxon>Ascomycota</taxon>
        <taxon>Pezizomycotina</taxon>
        <taxon>Sordariomycetes</taxon>
        <taxon>Sordariomycetidae</taxon>
        <taxon>Sordariales</taxon>
        <taxon>Sordariaceae</taxon>
        <taxon>Neurospora</taxon>
    </lineage>
</organism>
<accession>Q9Y756</accession>
<accession>Q7RV76</accession>
<comment type="function">
    <text evidence="1">Subunit of the V1 complex of vacuolar(H+)-ATPase (V-ATPase), a multisubunit enzyme composed of a peripheral complex (V1) that hydrolyzes ATP and a membrane integral complex (V0) that translocates protons (By similarity). V-ATPase is responsible for acidifying and maintaining the pH of intracellular compartments (By similarity).</text>
</comment>
<comment type="subunit">
    <text evidence="1">V-ATPase is a heteromultimeric enzyme composed of a peripheral catalytic V1 complex (components A to H) attached to an integral membrane V0 proton pore complex (components: a, c, c', c'', d, e, f and VOA1).</text>
</comment>
<comment type="subcellular location">
    <subcellularLocation>
        <location evidence="1">Vacuole membrane</location>
        <topology evidence="2">Peripheral membrane protein</topology>
        <orientation evidence="2">Cytoplasmic side</orientation>
    </subcellularLocation>
</comment>
<comment type="similarity">
    <text evidence="2">Belongs to the V-ATPase F subunit family.</text>
</comment>
<reference key="1">
    <citation type="journal article" date="1999" name="J. Bioenerg. Biomembr.">
        <title>The structure of the vacuolar ATPase in Neurospora crassa.</title>
        <authorList>
            <person name="Margolles-Clark E."/>
            <person name="Tenney K."/>
            <person name="Bowman E.J."/>
            <person name="Bowman B.J."/>
        </authorList>
    </citation>
    <scope>NUCLEOTIDE SEQUENCE [GENOMIC DNA]</scope>
</reference>
<reference key="2">
    <citation type="journal article" date="2003" name="Nucleic Acids Res.">
        <title>What's in the genome of a filamentous fungus? Analysis of the Neurospora genome sequence.</title>
        <authorList>
            <person name="Mannhaupt G."/>
            <person name="Montrone C."/>
            <person name="Haase D."/>
            <person name="Mewes H.-W."/>
            <person name="Aign V."/>
            <person name="Hoheisel J.D."/>
            <person name="Fartmann B."/>
            <person name="Nyakatura G."/>
            <person name="Kempken F."/>
            <person name="Maier J."/>
            <person name="Schulte U."/>
        </authorList>
    </citation>
    <scope>NUCLEOTIDE SEQUENCE [LARGE SCALE GENOMIC DNA]</scope>
    <source>
        <strain>ATCC 24698 / 74-OR23-1A / CBS 708.71 / DSM 1257 / FGSC 987</strain>
    </source>
</reference>
<reference key="3">
    <citation type="journal article" date="2003" name="Nature">
        <title>The genome sequence of the filamentous fungus Neurospora crassa.</title>
        <authorList>
            <person name="Galagan J.E."/>
            <person name="Calvo S.E."/>
            <person name="Borkovich K.A."/>
            <person name="Selker E.U."/>
            <person name="Read N.D."/>
            <person name="Jaffe D.B."/>
            <person name="FitzHugh W."/>
            <person name="Ma L.-J."/>
            <person name="Smirnov S."/>
            <person name="Purcell S."/>
            <person name="Rehman B."/>
            <person name="Elkins T."/>
            <person name="Engels R."/>
            <person name="Wang S."/>
            <person name="Nielsen C.B."/>
            <person name="Butler J."/>
            <person name="Endrizzi M."/>
            <person name="Qui D."/>
            <person name="Ianakiev P."/>
            <person name="Bell-Pedersen D."/>
            <person name="Nelson M.A."/>
            <person name="Werner-Washburne M."/>
            <person name="Selitrennikoff C.P."/>
            <person name="Kinsey J.A."/>
            <person name="Braun E.L."/>
            <person name="Zelter A."/>
            <person name="Schulte U."/>
            <person name="Kothe G.O."/>
            <person name="Jedd G."/>
            <person name="Mewes H.-W."/>
            <person name="Staben C."/>
            <person name="Marcotte E."/>
            <person name="Greenberg D."/>
            <person name="Roy A."/>
            <person name="Foley K."/>
            <person name="Naylor J."/>
            <person name="Stange-Thomann N."/>
            <person name="Barrett R."/>
            <person name="Gnerre S."/>
            <person name="Kamal M."/>
            <person name="Kamvysselis M."/>
            <person name="Mauceli E.W."/>
            <person name="Bielke C."/>
            <person name="Rudd S."/>
            <person name="Frishman D."/>
            <person name="Krystofova S."/>
            <person name="Rasmussen C."/>
            <person name="Metzenberg R.L."/>
            <person name="Perkins D.D."/>
            <person name="Kroken S."/>
            <person name="Cogoni C."/>
            <person name="Macino G."/>
            <person name="Catcheside D.E.A."/>
            <person name="Li W."/>
            <person name="Pratt R.J."/>
            <person name="Osmani S.A."/>
            <person name="DeSouza C.P.C."/>
            <person name="Glass N.L."/>
            <person name="Orbach M.J."/>
            <person name="Berglund J.A."/>
            <person name="Voelker R."/>
            <person name="Yarden O."/>
            <person name="Plamann M."/>
            <person name="Seiler S."/>
            <person name="Dunlap J.C."/>
            <person name="Radford A."/>
            <person name="Aramayo R."/>
            <person name="Natvig D.O."/>
            <person name="Alex L.A."/>
            <person name="Mannhaupt G."/>
            <person name="Ebbole D.J."/>
            <person name="Freitag M."/>
            <person name="Paulsen I."/>
            <person name="Sachs M.S."/>
            <person name="Lander E.S."/>
            <person name="Nusbaum C."/>
            <person name="Birren B.W."/>
        </authorList>
    </citation>
    <scope>NUCLEOTIDE SEQUENCE [LARGE SCALE GENOMIC DNA]</scope>
    <source>
        <strain>ATCC 24698 / 74-OR23-1A / CBS 708.71 / DSM 1257 / FGSC 987</strain>
    </source>
</reference>
<keyword id="KW-0375">Hydrogen ion transport</keyword>
<keyword id="KW-0406">Ion transport</keyword>
<keyword id="KW-0472">Membrane</keyword>
<keyword id="KW-1185">Reference proteome</keyword>
<keyword id="KW-0813">Transport</keyword>
<keyword id="KW-0926">Vacuole</keyword>
<sequence length="124" mass="13818">MATSQADARDRQFLAVIGDEDSVTGLLLAGIGHVTAPPDSQKNFLVVDNKTDNAAIEAAFDRFTTERKDIGIVLINQHIADRIRHRVDTHTAAFPTVLEIPSKDHPYDPEKDSVLRRVRRLFGE</sequence>
<proteinExistence type="inferred from homology"/>
<gene>
    <name type="primary">vma-7</name>
    <name type="ORF">29E8.280</name>
    <name type="ORF">NCU04387</name>
</gene>
<evidence type="ECO:0000250" key="1">
    <source>
        <dbReference type="UniProtKB" id="P39111"/>
    </source>
</evidence>
<evidence type="ECO:0000305" key="2"/>
<dbReference type="EMBL" id="AF099136">
    <property type="protein sequence ID" value="AAD20452.1"/>
    <property type="molecule type" value="Genomic_DNA"/>
</dbReference>
<dbReference type="EMBL" id="BX908809">
    <property type="protein sequence ID" value="CAF06061.1"/>
    <property type="molecule type" value="Genomic_DNA"/>
</dbReference>
<dbReference type="EMBL" id="CM002239">
    <property type="protein sequence ID" value="EAA28228.1"/>
    <property type="molecule type" value="Genomic_DNA"/>
</dbReference>
<dbReference type="RefSeq" id="XP_957464.1">
    <property type="nucleotide sequence ID" value="XM_952371.3"/>
</dbReference>
<dbReference type="SMR" id="Q9Y756"/>
<dbReference type="FunCoup" id="Q9Y756">
    <property type="interactions" value="698"/>
</dbReference>
<dbReference type="STRING" id="367110.Q9Y756"/>
<dbReference type="PaxDb" id="5141-EFNCRP00000005227"/>
<dbReference type="EnsemblFungi" id="EAA28228">
    <property type="protein sequence ID" value="EAA28228"/>
    <property type="gene ID" value="NCU04387"/>
</dbReference>
<dbReference type="GeneID" id="3873618"/>
<dbReference type="KEGG" id="ncr:NCU04387"/>
<dbReference type="VEuPathDB" id="FungiDB:NCU04387"/>
<dbReference type="HOGENOM" id="CLU_135754_0_0_1"/>
<dbReference type="InParanoid" id="Q9Y756"/>
<dbReference type="OMA" id="IIICQHI"/>
<dbReference type="OrthoDB" id="10261947at2759"/>
<dbReference type="Proteomes" id="UP000001805">
    <property type="component" value="Chromosome 4, Linkage Group IV"/>
</dbReference>
<dbReference type="GO" id="GO:0016020">
    <property type="term" value="C:membrane"/>
    <property type="evidence" value="ECO:0000318"/>
    <property type="project" value="GO_Central"/>
</dbReference>
<dbReference type="GO" id="GO:0000221">
    <property type="term" value="C:vacuolar proton-transporting V-type ATPase, V1 domain"/>
    <property type="evidence" value="ECO:0000250"/>
    <property type="project" value="UniProtKB"/>
</dbReference>
<dbReference type="GO" id="GO:0046961">
    <property type="term" value="F:proton-transporting ATPase activity, rotational mechanism"/>
    <property type="evidence" value="ECO:0007669"/>
    <property type="project" value="InterPro"/>
</dbReference>
<dbReference type="FunFam" id="3.40.50.10580:FF:000002">
    <property type="entry name" value="V-type proton ATPase subunit F"/>
    <property type="match status" value="1"/>
</dbReference>
<dbReference type="Gene3D" id="3.40.50.10580">
    <property type="entry name" value="ATPase, V1 complex, subunit F"/>
    <property type="match status" value="1"/>
</dbReference>
<dbReference type="InterPro" id="IPR008218">
    <property type="entry name" value="ATPase_V1-cplx_f_g_su"/>
</dbReference>
<dbReference type="InterPro" id="IPR005772">
    <property type="entry name" value="ATPase_V1-cplx_fsu_euk"/>
</dbReference>
<dbReference type="InterPro" id="IPR036906">
    <property type="entry name" value="ATPase_V1_fsu_sf"/>
</dbReference>
<dbReference type="NCBIfam" id="TIGR01101">
    <property type="entry name" value="V_ATP_synt_F"/>
    <property type="match status" value="1"/>
</dbReference>
<dbReference type="PANTHER" id="PTHR13861:SF2">
    <property type="entry name" value="V-TYPE PROTON ATPASE SUBUNIT F"/>
    <property type="match status" value="1"/>
</dbReference>
<dbReference type="PANTHER" id="PTHR13861">
    <property type="entry name" value="VACUOLAR ATP SYNTHASE SUBUNIT F"/>
    <property type="match status" value="1"/>
</dbReference>
<dbReference type="Pfam" id="PF01990">
    <property type="entry name" value="ATP-synt_F"/>
    <property type="match status" value="1"/>
</dbReference>
<dbReference type="PIRSF" id="PIRSF015945">
    <property type="entry name" value="ATPase_V1_F_euk"/>
    <property type="match status" value="1"/>
</dbReference>
<dbReference type="SUPFAM" id="SSF159468">
    <property type="entry name" value="AtpF-like"/>
    <property type="match status" value="1"/>
</dbReference>